<proteinExistence type="evidence at protein level"/>
<evidence type="ECO:0000250" key="1">
    <source>
        <dbReference type="UniProtKB" id="O46470"/>
    </source>
</evidence>
<evidence type="ECO:0000250" key="2">
    <source>
        <dbReference type="UniProtKB" id="O54829"/>
    </source>
</evidence>
<evidence type="ECO:0000250" key="3">
    <source>
        <dbReference type="UniProtKB" id="P49802"/>
    </source>
</evidence>
<evidence type="ECO:0000255" key="4">
    <source>
        <dbReference type="PROSITE-ProRule" id="PRU00066"/>
    </source>
</evidence>
<evidence type="ECO:0000255" key="5">
    <source>
        <dbReference type="PROSITE-ProRule" id="PRU00171"/>
    </source>
</evidence>
<evidence type="ECO:0000256" key="6">
    <source>
        <dbReference type="SAM" id="MobiDB-lite"/>
    </source>
</evidence>
<evidence type="ECO:0000269" key="7">
    <source>
    </source>
</evidence>
<evidence type="ECO:0000269" key="8">
    <source>
    </source>
</evidence>
<evidence type="ECO:0007744" key="9">
    <source>
    </source>
</evidence>
<comment type="function">
    <text evidence="2 3 7">GTPase activator component of the RGS7-GNB5 complex that regulates G protein-coupled receptor signaling cascades. The RGS7-GNB5 complex acts as an inhibitor signal transduction by promoting the GTPase activity of G protein alpha subunits, such as GNAO1, thereby driving them into their inactive GDP-bound form. May play a role in synaptic vesicle exocytosis (By similarity). Glycine-dependent regulation of the RGS7-GNB5 complex by GPR158 affects mood and cognition via its ability to regulate neuronal excitability in L2/L3 pyramidal neurons of the prefrontal cortex (By similarity). Modulates the activity of potassium channels that are activated by GNAO1 in response to muscarinic acetylcholine receptor M2/CHRM2 signaling (PubMed:10092682).</text>
</comment>
<comment type="subunit">
    <text evidence="2 3 7">Interacts with GNB5, forming the RGS7-GNB5 complex. Interacts with GPR158; promotes the GTPase activator activity of the RGS7-GNB5 complex in absence of glycine, in contrast GTPase activator activity of the RGS7-GNB5 complex is inhibited in presence of glycine (By similarity). Interacts with GPR179 (By similarity). Interacts with PKD1; this prevents rapid proteasomal degradation. Interacts with RGS7BP, leading to regulate the subcellular location of the heterodimer formed with GNB5. Interacts (phosphorylated form) with 14-3-3 protein YWHAQ. Interacts with SNAPIN. Interacts with GNAI1 (By similarity). Interacts with GNAO1, GNAI3 and GNAZ (PubMed:10092682).</text>
</comment>
<comment type="subcellular location">
    <subcellularLocation>
        <location evidence="3">Cytoplasm</location>
        <location evidence="3">Cytosol</location>
    </subcellularLocation>
    <subcellularLocation>
        <location evidence="3">Cytoplasm</location>
    </subcellularLocation>
    <subcellularLocation>
        <location evidence="3">Cell membrane</location>
    </subcellularLocation>
    <subcellularLocation>
        <location evidence="3">Membrane</location>
        <topology evidence="3">Peripheral membrane protein</topology>
        <orientation evidence="3">Cytoplasmic side</orientation>
    </subcellularLocation>
    <text evidence="3">Interaction with PKD1 promotes location at the cell membrane. Interaction with RGS7BP promotes location at the cell membrane.</text>
</comment>
<comment type="tissue specificity">
    <text evidence="7 8">Brain-specific. Predominantly cerebellar granule cells.</text>
</comment>
<comment type="PTM">
    <text evidence="1">Palmitoylated.</text>
</comment>
<comment type="PTM">
    <text evidence="3">Ubiquitinated, leading to rapid proteasomal degradation.</text>
</comment>
<comment type="PTM">
    <text evidence="3">Phosphorylation and subsequent interaction with 14-3-3 proteins inhibits GAP activity.</text>
</comment>
<feature type="chain" id="PRO_0000204198" description="Regulator of G-protein signaling 7">
    <location>
        <begin position="1"/>
        <end position="477"/>
    </location>
</feature>
<feature type="domain" description="DEP" evidence="4">
    <location>
        <begin position="37"/>
        <end position="112"/>
    </location>
</feature>
<feature type="domain" description="G protein gamma">
    <location>
        <begin position="255"/>
        <end position="316"/>
    </location>
</feature>
<feature type="domain" description="RGS" evidence="5">
    <location>
        <begin position="333"/>
        <end position="448"/>
    </location>
</feature>
<feature type="region of interest" description="Disordered" evidence="6">
    <location>
        <begin position="236"/>
        <end position="257"/>
    </location>
</feature>
<feature type="modified residue" description="Phosphoserine" evidence="9">
    <location>
        <position position="229"/>
    </location>
</feature>
<feature type="modified residue" description="Phosphoserine" evidence="2">
    <location>
        <position position="241"/>
    </location>
</feature>
<feature type="modified residue" description="Phosphothreonine" evidence="2">
    <location>
        <position position="243"/>
    </location>
</feature>
<feature type="modified residue" description="Phosphoserine" evidence="3">
    <location>
        <position position="434"/>
    </location>
</feature>
<protein>
    <recommendedName>
        <fullName>Regulator of G-protein signaling 7</fullName>
        <shortName>RGS7</shortName>
    </recommendedName>
</protein>
<keyword id="KW-1003">Cell membrane</keyword>
<keyword id="KW-0963">Cytoplasm</keyword>
<keyword id="KW-0343">GTPase activation</keyword>
<keyword id="KW-0449">Lipoprotein</keyword>
<keyword id="KW-0472">Membrane</keyword>
<keyword id="KW-0564">Palmitate</keyword>
<keyword id="KW-0597">Phosphoprotein</keyword>
<keyword id="KW-1185">Reference proteome</keyword>
<keyword id="KW-0734">Signal transduction inhibitor</keyword>
<keyword id="KW-0832">Ubl conjugation</keyword>
<dbReference type="EMBL" id="AB024398">
    <property type="protein sequence ID" value="BAA75635.1"/>
    <property type="molecule type" value="mRNA"/>
</dbReference>
<dbReference type="EMBL" id="U32328">
    <property type="protein sequence ID" value="AAC52368.1"/>
    <property type="molecule type" value="mRNA"/>
</dbReference>
<dbReference type="RefSeq" id="NP_062216.1">
    <property type="nucleotide sequence ID" value="NM_019343.2"/>
</dbReference>
<dbReference type="RefSeq" id="XP_038946956.1">
    <property type="nucleotide sequence ID" value="XM_039091028.2"/>
</dbReference>
<dbReference type="RefSeq" id="XP_038946957.1">
    <property type="nucleotide sequence ID" value="XM_039091029.2"/>
</dbReference>
<dbReference type="SMR" id="P49803"/>
<dbReference type="BioGRID" id="248516">
    <property type="interactions" value="1"/>
</dbReference>
<dbReference type="CORUM" id="P49803"/>
<dbReference type="FunCoup" id="P49803">
    <property type="interactions" value="1565"/>
</dbReference>
<dbReference type="STRING" id="10116.ENSRNOP00000063631"/>
<dbReference type="CarbonylDB" id="P49803"/>
<dbReference type="iPTMnet" id="P49803"/>
<dbReference type="PhosphoSitePlus" id="P49803"/>
<dbReference type="jPOST" id="P49803"/>
<dbReference type="PaxDb" id="10116-ENSRNOP00000063631"/>
<dbReference type="Ensembl" id="ENSRNOT00000116817.1">
    <property type="protein sequence ID" value="ENSRNOP00000082844.1"/>
    <property type="gene ID" value="ENSRNOG00000021984.7"/>
</dbReference>
<dbReference type="GeneID" id="54296"/>
<dbReference type="KEGG" id="rno:54296"/>
<dbReference type="UCSC" id="RGD:3570">
    <property type="organism name" value="rat"/>
</dbReference>
<dbReference type="AGR" id="RGD:3570"/>
<dbReference type="CTD" id="6000"/>
<dbReference type="RGD" id="3570">
    <property type="gene designation" value="Rgs7"/>
</dbReference>
<dbReference type="eggNOG" id="KOG3589">
    <property type="taxonomic scope" value="Eukaryota"/>
</dbReference>
<dbReference type="GeneTree" id="ENSGT00940000156661"/>
<dbReference type="InParanoid" id="P49803"/>
<dbReference type="OMA" id="YVEYDPC"/>
<dbReference type="OrthoDB" id="196547at2759"/>
<dbReference type="PhylomeDB" id="P49803"/>
<dbReference type="TreeFam" id="TF351956"/>
<dbReference type="Reactome" id="R-RNO-418594">
    <property type="pathway name" value="G alpha (i) signalling events"/>
</dbReference>
<dbReference type="Reactome" id="R-RNO-6814122">
    <property type="pathway name" value="Cooperation of PDCL (PhLP1) and TRiC/CCT in G-protein beta folding"/>
</dbReference>
<dbReference type="PRO" id="PR:P49803"/>
<dbReference type="Proteomes" id="UP000002494">
    <property type="component" value="Chromosome 13"/>
</dbReference>
<dbReference type="GO" id="GO:0051286">
    <property type="term" value="C:cell tip"/>
    <property type="evidence" value="ECO:0000266"/>
    <property type="project" value="RGD"/>
</dbReference>
<dbReference type="GO" id="GO:0005737">
    <property type="term" value="C:cytoplasm"/>
    <property type="evidence" value="ECO:0000318"/>
    <property type="project" value="GO_Central"/>
</dbReference>
<dbReference type="GO" id="GO:0005829">
    <property type="term" value="C:cytosol"/>
    <property type="evidence" value="ECO:0000266"/>
    <property type="project" value="RGD"/>
</dbReference>
<dbReference type="GO" id="GO:0030425">
    <property type="term" value="C:dendrite"/>
    <property type="evidence" value="ECO:0000266"/>
    <property type="project" value="RGD"/>
</dbReference>
<dbReference type="GO" id="GO:0044292">
    <property type="term" value="C:dendrite terminus"/>
    <property type="evidence" value="ECO:0000266"/>
    <property type="project" value="RGD"/>
</dbReference>
<dbReference type="GO" id="GO:0098978">
    <property type="term" value="C:glutamatergic synapse"/>
    <property type="evidence" value="ECO:0000266"/>
    <property type="project" value="RGD"/>
</dbReference>
<dbReference type="GO" id="GO:0043005">
    <property type="term" value="C:neuron projection"/>
    <property type="evidence" value="ECO:0000318"/>
    <property type="project" value="GO_Central"/>
</dbReference>
<dbReference type="GO" id="GO:0005635">
    <property type="term" value="C:nuclear envelope"/>
    <property type="evidence" value="ECO:0000314"/>
    <property type="project" value="RGD"/>
</dbReference>
<dbReference type="GO" id="GO:0005634">
    <property type="term" value="C:nucleus"/>
    <property type="evidence" value="ECO:0000266"/>
    <property type="project" value="RGD"/>
</dbReference>
<dbReference type="GO" id="GO:0005886">
    <property type="term" value="C:plasma membrane"/>
    <property type="evidence" value="ECO:0000266"/>
    <property type="project" value="RGD"/>
</dbReference>
<dbReference type="GO" id="GO:0045211">
    <property type="term" value="C:postsynaptic membrane"/>
    <property type="evidence" value="ECO:0000266"/>
    <property type="project" value="RGD"/>
</dbReference>
<dbReference type="GO" id="GO:0098793">
    <property type="term" value="C:presynapse"/>
    <property type="evidence" value="ECO:0000266"/>
    <property type="project" value="RGD"/>
</dbReference>
<dbReference type="GO" id="GO:0042734">
    <property type="term" value="C:presynaptic membrane"/>
    <property type="evidence" value="ECO:0000266"/>
    <property type="project" value="RGD"/>
</dbReference>
<dbReference type="GO" id="GO:0032991">
    <property type="term" value="C:protein-containing complex"/>
    <property type="evidence" value="ECO:0000314"/>
    <property type="project" value="RGD"/>
</dbReference>
<dbReference type="GO" id="GO:0001965">
    <property type="term" value="F:G-protein alpha-subunit binding"/>
    <property type="evidence" value="ECO:0000314"/>
    <property type="project" value="RGD"/>
</dbReference>
<dbReference type="GO" id="GO:0031681">
    <property type="term" value="F:G-protein beta-subunit binding"/>
    <property type="evidence" value="ECO:0000353"/>
    <property type="project" value="RGD"/>
</dbReference>
<dbReference type="GO" id="GO:0005096">
    <property type="term" value="F:GTPase activator activity"/>
    <property type="evidence" value="ECO:0000250"/>
    <property type="project" value="UniProtKB"/>
</dbReference>
<dbReference type="GO" id="GO:0007186">
    <property type="term" value="P:G protein-coupled receptor signaling pathway"/>
    <property type="evidence" value="ECO:0000266"/>
    <property type="project" value="RGD"/>
</dbReference>
<dbReference type="GO" id="GO:0035556">
    <property type="term" value="P:intracellular signal transduction"/>
    <property type="evidence" value="ECO:0007669"/>
    <property type="project" value="InterPro"/>
</dbReference>
<dbReference type="GO" id="GO:0045744">
    <property type="term" value="P:negative regulation of G protein-coupled receptor signaling pathway"/>
    <property type="evidence" value="ECO:0000250"/>
    <property type="project" value="UniProtKB"/>
</dbReference>
<dbReference type="GO" id="GO:1901381">
    <property type="term" value="P:positive regulation of potassium ion transmembrane transport"/>
    <property type="evidence" value="ECO:0000314"/>
    <property type="project" value="RGD"/>
</dbReference>
<dbReference type="GO" id="GO:0008277">
    <property type="term" value="P:regulation of G protein-coupled receptor signaling pathway"/>
    <property type="evidence" value="ECO:0000314"/>
    <property type="project" value="RGD"/>
</dbReference>
<dbReference type="GO" id="GO:0060078">
    <property type="term" value="P:regulation of postsynaptic membrane potential"/>
    <property type="evidence" value="ECO:0000266"/>
    <property type="project" value="RGD"/>
</dbReference>
<dbReference type="GO" id="GO:0001975">
    <property type="term" value="P:response to amphetamine"/>
    <property type="evidence" value="ECO:0000270"/>
    <property type="project" value="RGD"/>
</dbReference>
<dbReference type="GO" id="GO:0045471">
    <property type="term" value="P:response to ethanol"/>
    <property type="evidence" value="ECO:0000270"/>
    <property type="project" value="RGD"/>
</dbReference>
<dbReference type="CDD" id="cd04450">
    <property type="entry name" value="DEP_RGS7-like"/>
    <property type="match status" value="1"/>
</dbReference>
<dbReference type="CDD" id="cd00068">
    <property type="entry name" value="GGL"/>
    <property type="match status" value="1"/>
</dbReference>
<dbReference type="CDD" id="cd08738">
    <property type="entry name" value="RGS_RGS7"/>
    <property type="match status" value="1"/>
</dbReference>
<dbReference type="FunFam" id="1.10.10.10:FF:000162">
    <property type="entry name" value="Regulator of G-protein signaling 6"/>
    <property type="match status" value="1"/>
</dbReference>
<dbReference type="FunFam" id="1.10.1240.60:FF:000001">
    <property type="entry name" value="Regulator of G-protein signaling 6"/>
    <property type="match status" value="1"/>
</dbReference>
<dbReference type="FunFam" id="4.10.260.10:FF:000002">
    <property type="entry name" value="Regulator of G-protein signaling 6"/>
    <property type="match status" value="1"/>
</dbReference>
<dbReference type="FunFam" id="1.10.167.10:FF:000002">
    <property type="entry name" value="Regulator of G-protein signaling 6 isoform 9"/>
    <property type="match status" value="1"/>
</dbReference>
<dbReference type="Gene3D" id="1.10.1240.60">
    <property type="match status" value="1"/>
</dbReference>
<dbReference type="Gene3D" id="1.10.167.10">
    <property type="entry name" value="Regulator of G-protein Signalling 4, domain 2"/>
    <property type="match status" value="1"/>
</dbReference>
<dbReference type="Gene3D" id="4.10.260.10">
    <property type="entry name" value="Transducin (heterotrimeric G protein), gamma chain"/>
    <property type="match status" value="1"/>
</dbReference>
<dbReference type="Gene3D" id="1.10.10.10">
    <property type="entry name" value="Winged helix-like DNA-binding domain superfamily/Winged helix DNA-binding domain"/>
    <property type="match status" value="1"/>
</dbReference>
<dbReference type="InterPro" id="IPR000591">
    <property type="entry name" value="DEP_dom"/>
</dbReference>
<dbReference type="InterPro" id="IPR015898">
    <property type="entry name" value="G-protein_gamma-like_dom"/>
</dbReference>
<dbReference type="InterPro" id="IPR036284">
    <property type="entry name" value="GGL_sf"/>
</dbReference>
<dbReference type="InterPro" id="IPR016137">
    <property type="entry name" value="RGS"/>
</dbReference>
<dbReference type="InterPro" id="IPR047016">
    <property type="entry name" value="RGS6/7/9/11"/>
</dbReference>
<dbReference type="InterPro" id="IPR047017">
    <property type="entry name" value="RGS6/7/9/11_DHEX_sf"/>
</dbReference>
<dbReference type="InterPro" id="IPR040759">
    <property type="entry name" value="RGS_DHEX"/>
</dbReference>
<dbReference type="InterPro" id="IPR036305">
    <property type="entry name" value="RGS_sf"/>
</dbReference>
<dbReference type="InterPro" id="IPR044926">
    <property type="entry name" value="RGS_subdomain_2"/>
</dbReference>
<dbReference type="InterPro" id="IPR036388">
    <property type="entry name" value="WH-like_DNA-bd_sf"/>
</dbReference>
<dbReference type="InterPro" id="IPR036390">
    <property type="entry name" value="WH_DNA-bd_sf"/>
</dbReference>
<dbReference type="PANTHER" id="PTHR45746">
    <property type="entry name" value="LP21163P"/>
    <property type="match status" value="1"/>
</dbReference>
<dbReference type="PANTHER" id="PTHR45746:SF7">
    <property type="entry name" value="REGULATOR OF G-PROTEIN SIGNALING 7"/>
    <property type="match status" value="1"/>
</dbReference>
<dbReference type="Pfam" id="PF00610">
    <property type="entry name" value="DEP"/>
    <property type="match status" value="1"/>
</dbReference>
<dbReference type="Pfam" id="PF00631">
    <property type="entry name" value="G-gamma"/>
    <property type="match status" value="1"/>
</dbReference>
<dbReference type="Pfam" id="PF00615">
    <property type="entry name" value="RGS"/>
    <property type="match status" value="1"/>
</dbReference>
<dbReference type="Pfam" id="PF18148">
    <property type="entry name" value="RGS_DHEX"/>
    <property type="match status" value="1"/>
</dbReference>
<dbReference type="PRINTS" id="PR01301">
    <property type="entry name" value="RGSPROTEIN"/>
</dbReference>
<dbReference type="SMART" id="SM00049">
    <property type="entry name" value="DEP"/>
    <property type="match status" value="1"/>
</dbReference>
<dbReference type="SMART" id="SM01224">
    <property type="entry name" value="G_gamma"/>
    <property type="match status" value="1"/>
</dbReference>
<dbReference type="SMART" id="SM00224">
    <property type="entry name" value="GGL"/>
    <property type="match status" value="1"/>
</dbReference>
<dbReference type="SMART" id="SM00315">
    <property type="entry name" value="RGS"/>
    <property type="match status" value="1"/>
</dbReference>
<dbReference type="SUPFAM" id="SSF48097">
    <property type="entry name" value="Regulator of G-protein signaling, RGS"/>
    <property type="match status" value="1"/>
</dbReference>
<dbReference type="SUPFAM" id="SSF48670">
    <property type="entry name" value="Transducin (heterotrimeric G protein), gamma chain"/>
    <property type="match status" value="1"/>
</dbReference>
<dbReference type="SUPFAM" id="SSF46785">
    <property type="entry name" value="Winged helix' DNA-binding domain"/>
    <property type="match status" value="1"/>
</dbReference>
<dbReference type="PROSITE" id="PS50186">
    <property type="entry name" value="DEP"/>
    <property type="match status" value="1"/>
</dbReference>
<dbReference type="PROSITE" id="PS50132">
    <property type="entry name" value="RGS"/>
    <property type="match status" value="1"/>
</dbReference>
<gene>
    <name type="primary">Rgs7</name>
</gene>
<organism>
    <name type="scientific">Rattus norvegicus</name>
    <name type="common">Rat</name>
    <dbReference type="NCBI Taxonomy" id="10116"/>
    <lineage>
        <taxon>Eukaryota</taxon>
        <taxon>Metazoa</taxon>
        <taxon>Chordata</taxon>
        <taxon>Craniata</taxon>
        <taxon>Vertebrata</taxon>
        <taxon>Euteleostomi</taxon>
        <taxon>Mammalia</taxon>
        <taxon>Eutheria</taxon>
        <taxon>Euarchontoglires</taxon>
        <taxon>Glires</taxon>
        <taxon>Rodentia</taxon>
        <taxon>Myomorpha</taxon>
        <taxon>Muroidea</taxon>
        <taxon>Muridae</taxon>
        <taxon>Murinae</taxon>
        <taxon>Rattus</taxon>
    </lineage>
</organism>
<accession>P49803</accession>
<accession>Q9R0R0</accession>
<name>RGS7_RAT</name>
<reference key="1">
    <citation type="journal article" date="1999" name="J. Biol. Chem.">
        <title>RGS7 and RGS8 differentially accelerate G protein-mediated modulation of K+ currents.</title>
        <authorList>
            <person name="Saitoh O."/>
            <person name="Kubo Y."/>
            <person name="Odagiri M."/>
            <person name="Ichikawa M."/>
            <person name="Yamagata K."/>
            <person name="Sekine T."/>
        </authorList>
    </citation>
    <scope>NUCLEOTIDE SEQUENCE [MRNA]</scope>
    <scope>FUNCTION</scope>
    <scope>INTERACTION WITH GNAO1; GNAI3 AND GNAZ</scope>
    <scope>TISSUE SPECIFICITY</scope>
</reference>
<reference key="2">
    <citation type="journal article" date="1996" name="Cell">
        <title>EGL-10 regulates G protein signaling in the C. elegans nervous system and shares a conserved domain with many mammalian proteins.</title>
        <authorList>
            <person name="Koelle M.R."/>
            <person name="Horvitz H.R."/>
        </authorList>
    </citation>
    <scope>NUCLEOTIDE SEQUENCE [MRNA] OF 364-429</scope>
    <source>
        <tissue>Brain</tissue>
    </source>
</reference>
<reference key="3">
    <citation type="journal article" date="1997" name="J. Neurosci.">
        <title>Regulators of G-protein signaling (RGS) proteins: region-specific expression of nine subtypes in rat brain.</title>
        <authorList>
            <person name="Gold S.J."/>
            <person name="Ni Y.G."/>
            <person name="Dohlman H.G."/>
            <person name="Nestler E.J."/>
        </authorList>
    </citation>
    <scope>TISSUE SPECIFICITY</scope>
</reference>
<reference key="4">
    <citation type="journal article" date="2012" name="Nat. Commun.">
        <title>Quantitative maps of protein phosphorylation sites across 14 different rat organs and tissues.</title>
        <authorList>
            <person name="Lundby A."/>
            <person name="Secher A."/>
            <person name="Lage K."/>
            <person name="Nordsborg N.B."/>
            <person name="Dmytriyev A."/>
            <person name="Lundby C."/>
            <person name="Olsen J.V."/>
        </authorList>
    </citation>
    <scope>PHOSPHORYLATION [LARGE SCALE ANALYSIS] AT SER-229</scope>
    <scope>IDENTIFICATION BY MASS SPECTROMETRY [LARGE SCALE ANALYSIS]</scope>
</reference>
<sequence length="477" mass="55691">MAQGNNYGQTSNGVAEESPNMLVYRKMEDVIARMQDEKNGIPIRTVKSFLSKIPSVFSGSDIVQWLIKNLTIEDPVEALHLGTLMAAHGYFFPISDHVLTLKDDGTFYRFQTPYFWPSNCWEPENTDYAVYLCKRTMQNKARLELADYEAESLARLQRAFARKWEFIFMQAEAQAKVDKKRDKIERKILDSQERAFWDVHRPVPGCVNTTEVDIKKSSRMRNPHKTRKSVYGLQNDIRSHSPTHTPTPETKPPTEDELHRQIKYWQIQLDRHRLKMSKVADSLLSYTEQYVEYDPFLVPPDPSNPWLSDDTTFWELEASKEPSQQRVKRWGFGMDEALKDPVGREQFLKFLESEFSSENLRFWLAVEDLKKRPIREVPSRVQEIWQEFLAPGAPSAINLDSKSYDKTTQNVKEPGRYTFEDAQEHIYKLMKSDSYPRFIRSSAYQELLQAKRKGRNIPIFPCHKNCTPTLRASTNLL</sequence>